<keyword id="KW-1003">Cell membrane</keyword>
<keyword id="KW-1015">Disulfide bond</keyword>
<keyword id="KW-0297">G-protein coupled receptor</keyword>
<keyword id="KW-0325">Glycoprotein</keyword>
<keyword id="KW-0472">Membrane</keyword>
<keyword id="KW-0552">Olfaction</keyword>
<keyword id="KW-0675">Receptor</keyword>
<keyword id="KW-1185">Reference proteome</keyword>
<keyword id="KW-0716">Sensory transduction</keyword>
<keyword id="KW-0807">Transducer</keyword>
<keyword id="KW-0812">Transmembrane</keyword>
<keyword id="KW-1133">Transmembrane helix</keyword>
<gene>
    <name evidence="4" type="primary">Or5p60</name>
    <name evidence="4" type="synonym">Mor204-16</name>
    <name evidence="4" type="synonym">Olfr484</name>
</gene>
<organism>
    <name type="scientific">Mus musculus</name>
    <name type="common">Mouse</name>
    <dbReference type="NCBI Taxonomy" id="10090"/>
    <lineage>
        <taxon>Eukaryota</taxon>
        <taxon>Metazoa</taxon>
        <taxon>Chordata</taxon>
        <taxon>Craniata</taxon>
        <taxon>Vertebrata</taxon>
        <taxon>Euteleostomi</taxon>
        <taxon>Mammalia</taxon>
        <taxon>Eutheria</taxon>
        <taxon>Euarchontoglires</taxon>
        <taxon>Glires</taxon>
        <taxon>Rodentia</taxon>
        <taxon>Myomorpha</taxon>
        <taxon>Muroidea</taxon>
        <taxon>Muridae</taxon>
        <taxon>Murinae</taxon>
        <taxon>Mus</taxon>
        <taxon>Mus</taxon>
    </lineage>
</organism>
<evidence type="ECO:0000255" key="1"/>
<evidence type="ECO:0000255" key="2">
    <source>
        <dbReference type="PROSITE-ProRule" id="PRU00521"/>
    </source>
</evidence>
<evidence type="ECO:0000305" key="3"/>
<evidence type="ECO:0000312" key="4">
    <source>
        <dbReference type="MGI" id="MGI:3030318"/>
    </source>
</evidence>
<proteinExistence type="inferred from homology"/>
<sequence>MAFLHNGNHTAVTEFILLGLTDDPVLRIVLFTIILCIYLVTVSGNLSTILLIRVSSQLHHPMYFFLSHLASADIGYSSSVTPNMLVNFLVKQNTISYIGCSIQFGSAAFFGGLECFLLAVMAYDRFVAICNPLLYSTKMSTQVCVQLVVGSYIGGFLNASFATVSFLFLFFCGPNIINHFFCDFAPLIELSCSDVRISVLVTSFSAGTVTMLTVLVIAISYTYILITILKMRSTEGRHKAFSTCTSHLTAVSLFYGTITFIYVMPKSRYSTDQNKVVSVFYMVVIPMLNPLIYSLRNNEIKGALRRHLGKKIFSQSNILFY</sequence>
<dbReference type="EMBL" id="AY073598">
    <property type="protein sequence ID" value="AAL61261.1"/>
    <property type="molecule type" value="Genomic_DNA"/>
</dbReference>
<dbReference type="EMBL" id="AY317592">
    <property type="protein sequence ID" value="AAP70988.1"/>
    <property type="molecule type" value="Genomic_DNA"/>
</dbReference>
<dbReference type="CCDS" id="CCDS21706.1"/>
<dbReference type="RefSeq" id="NP_666710.1">
    <property type="nucleotide sequence ID" value="NM_146499.1"/>
</dbReference>
<dbReference type="SMR" id="Q8VFD3"/>
<dbReference type="FunCoup" id="Q8VFD3">
    <property type="interactions" value="1143"/>
</dbReference>
<dbReference type="STRING" id="10090.ENSMUSP00000150774"/>
<dbReference type="GlyCosmos" id="Q8VFD3">
    <property type="glycosylation" value="1 site, No reported glycans"/>
</dbReference>
<dbReference type="GlyGen" id="Q8VFD3">
    <property type="glycosylation" value="1 site"/>
</dbReference>
<dbReference type="PaxDb" id="10090-ENSMUSP00000073267"/>
<dbReference type="Ensembl" id="ENSMUST00000210881.2">
    <property type="protein sequence ID" value="ENSMUSP00000147263.2"/>
    <property type="gene ID" value="ENSMUSG00000110171.3"/>
</dbReference>
<dbReference type="Ensembl" id="ENSMUST00000214722.2">
    <property type="protein sequence ID" value="ENSMUSP00000150774.2"/>
    <property type="gene ID" value="ENSMUSG00000110171.3"/>
</dbReference>
<dbReference type="GeneID" id="258492"/>
<dbReference type="KEGG" id="mmu:258492"/>
<dbReference type="UCSC" id="uc009jbz.1">
    <property type="organism name" value="mouse"/>
</dbReference>
<dbReference type="AGR" id="MGI:3030318"/>
<dbReference type="CTD" id="258492"/>
<dbReference type="MGI" id="MGI:3030318">
    <property type="gene designation" value="Or5p60"/>
</dbReference>
<dbReference type="VEuPathDB" id="HostDB:ENSMUSG00000110171"/>
<dbReference type="eggNOG" id="ENOG502SKA1">
    <property type="taxonomic scope" value="Eukaryota"/>
</dbReference>
<dbReference type="GeneTree" id="ENSGT01130000278279"/>
<dbReference type="HOGENOM" id="CLU_012526_1_0_1"/>
<dbReference type="InParanoid" id="Q8VFD3"/>
<dbReference type="OMA" id="AFTYMQP"/>
<dbReference type="OrthoDB" id="9440694at2759"/>
<dbReference type="PhylomeDB" id="Q8VFD3"/>
<dbReference type="TreeFam" id="TF338848"/>
<dbReference type="BioGRID-ORCS" id="258492">
    <property type="hits" value="2 hits in 38 CRISPR screens"/>
</dbReference>
<dbReference type="PRO" id="PR:Q8VFD3"/>
<dbReference type="Proteomes" id="UP000000589">
    <property type="component" value="Chromosome 7"/>
</dbReference>
<dbReference type="RNAct" id="Q8VFD3">
    <property type="molecule type" value="protein"/>
</dbReference>
<dbReference type="Bgee" id="ENSMUSG00000110171">
    <property type="expression patterns" value="Expressed in proximal tubule"/>
</dbReference>
<dbReference type="ExpressionAtlas" id="Q8VFD3">
    <property type="expression patterns" value="baseline and differential"/>
</dbReference>
<dbReference type="GO" id="GO:0016020">
    <property type="term" value="C:membrane"/>
    <property type="evidence" value="ECO:0000247"/>
    <property type="project" value="MGI"/>
</dbReference>
<dbReference type="GO" id="GO:0005886">
    <property type="term" value="C:plasma membrane"/>
    <property type="evidence" value="ECO:0007669"/>
    <property type="project" value="UniProtKB-SubCell"/>
</dbReference>
<dbReference type="GO" id="GO:0004930">
    <property type="term" value="F:G protein-coupled receptor activity"/>
    <property type="evidence" value="ECO:0007669"/>
    <property type="project" value="UniProtKB-KW"/>
</dbReference>
<dbReference type="GO" id="GO:0004984">
    <property type="term" value="F:olfactory receptor activity"/>
    <property type="evidence" value="ECO:0000247"/>
    <property type="project" value="MGI"/>
</dbReference>
<dbReference type="GO" id="GO:0007186">
    <property type="term" value="P:G protein-coupled receptor signaling pathway"/>
    <property type="evidence" value="ECO:0000247"/>
    <property type="project" value="MGI"/>
</dbReference>
<dbReference type="GO" id="GO:0007608">
    <property type="term" value="P:sensory perception of smell"/>
    <property type="evidence" value="ECO:0000247"/>
    <property type="project" value="MGI"/>
</dbReference>
<dbReference type="CDD" id="cd15416">
    <property type="entry name" value="7tmA_OR5P-like"/>
    <property type="match status" value="1"/>
</dbReference>
<dbReference type="FunFam" id="1.20.1070.10:FF:000004">
    <property type="entry name" value="Olfactory receptor"/>
    <property type="match status" value="1"/>
</dbReference>
<dbReference type="Gene3D" id="1.20.1070.10">
    <property type="entry name" value="Rhodopsin 7-helix transmembrane proteins"/>
    <property type="match status" value="1"/>
</dbReference>
<dbReference type="InterPro" id="IPR000276">
    <property type="entry name" value="GPCR_Rhodpsn"/>
</dbReference>
<dbReference type="InterPro" id="IPR017452">
    <property type="entry name" value="GPCR_Rhodpsn_7TM"/>
</dbReference>
<dbReference type="InterPro" id="IPR000725">
    <property type="entry name" value="Olfact_rcpt"/>
</dbReference>
<dbReference type="PANTHER" id="PTHR48018">
    <property type="entry name" value="OLFACTORY RECEPTOR"/>
    <property type="match status" value="1"/>
</dbReference>
<dbReference type="Pfam" id="PF13853">
    <property type="entry name" value="7tm_4"/>
    <property type="match status" value="1"/>
</dbReference>
<dbReference type="PRINTS" id="PR00237">
    <property type="entry name" value="GPCRRHODOPSN"/>
</dbReference>
<dbReference type="PRINTS" id="PR00245">
    <property type="entry name" value="OLFACTORYR"/>
</dbReference>
<dbReference type="SUPFAM" id="SSF81321">
    <property type="entry name" value="Family A G protein-coupled receptor-like"/>
    <property type="match status" value="1"/>
</dbReference>
<dbReference type="PROSITE" id="PS00237">
    <property type="entry name" value="G_PROTEIN_RECEP_F1_1"/>
    <property type="match status" value="1"/>
</dbReference>
<dbReference type="PROSITE" id="PS50262">
    <property type="entry name" value="G_PROTEIN_RECEP_F1_2"/>
    <property type="match status" value="1"/>
</dbReference>
<feature type="chain" id="PRO_0000150842" description="Olfactory receptor 5P60">
    <location>
        <begin position="1"/>
        <end position="321"/>
    </location>
</feature>
<feature type="topological domain" description="Extracellular" evidence="1">
    <location>
        <begin position="1"/>
        <end position="28"/>
    </location>
</feature>
<feature type="transmembrane region" description="Helical; Name=1" evidence="1">
    <location>
        <begin position="29"/>
        <end position="49"/>
    </location>
</feature>
<feature type="topological domain" description="Cytoplasmic" evidence="1">
    <location>
        <begin position="50"/>
        <end position="57"/>
    </location>
</feature>
<feature type="transmembrane region" description="Helical; Name=2" evidence="1">
    <location>
        <begin position="58"/>
        <end position="78"/>
    </location>
</feature>
<feature type="topological domain" description="Extracellular" evidence="1">
    <location>
        <begin position="79"/>
        <end position="102"/>
    </location>
</feature>
<feature type="transmembrane region" description="Helical; Name=3" evidence="1">
    <location>
        <begin position="103"/>
        <end position="123"/>
    </location>
</feature>
<feature type="topological domain" description="Cytoplasmic" evidence="1">
    <location>
        <begin position="124"/>
        <end position="136"/>
    </location>
</feature>
<feature type="transmembrane region" description="Helical; Name=4" evidence="1">
    <location>
        <begin position="137"/>
        <end position="157"/>
    </location>
</feature>
<feature type="topological domain" description="Extracellular" evidence="1">
    <location>
        <begin position="158"/>
        <end position="199"/>
    </location>
</feature>
<feature type="transmembrane region" description="Helical; Name=5" evidence="1">
    <location>
        <begin position="200"/>
        <end position="220"/>
    </location>
</feature>
<feature type="topological domain" description="Cytoplasmic" evidence="1">
    <location>
        <begin position="221"/>
        <end position="240"/>
    </location>
</feature>
<feature type="transmembrane region" description="Helical; Name=6" evidence="1">
    <location>
        <begin position="241"/>
        <end position="261"/>
    </location>
</feature>
<feature type="topological domain" description="Extracellular" evidence="1">
    <location>
        <begin position="262"/>
        <end position="274"/>
    </location>
</feature>
<feature type="transmembrane region" description="Helical; Name=7" evidence="1">
    <location>
        <begin position="275"/>
        <end position="295"/>
    </location>
</feature>
<feature type="topological domain" description="Cytoplasmic" evidence="1">
    <location>
        <begin position="296"/>
        <end position="321"/>
    </location>
</feature>
<feature type="glycosylation site" description="N-linked (GlcNAc...) asparagine" evidence="1">
    <location>
        <position position="8"/>
    </location>
</feature>
<feature type="disulfide bond" evidence="2">
    <location>
        <begin position="100"/>
        <end position="192"/>
    </location>
</feature>
<protein>
    <recommendedName>
        <fullName evidence="3">Olfactory receptor 5P60</fullName>
    </recommendedName>
    <alternativeName>
        <fullName>Olfactory receptor 204-16</fullName>
    </alternativeName>
    <alternativeName>
        <fullName>Olfactory receptor 484</fullName>
    </alternativeName>
</protein>
<accession>Q8VFD3</accession>
<name>O5P60_MOUSE</name>
<reference key="1">
    <citation type="journal article" date="2002" name="Nat. Neurosci.">
        <title>The olfactory receptor gene superfamily of the mouse.</title>
        <authorList>
            <person name="Zhang X."/>
            <person name="Firestein S."/>
        </authorList>
    </citation>
    <scope>NUCLEOTIDE SEQUENCE [GENOMIC DNA]</scope>
</reference>
<reference key="2">
    <citation type="journal article" date="2002" name="Hum. Mol. Genet.">
        <title>Different evolutionary processes shaped the mouse and human olfactory receptor gene families.</title>
        <authorList>
            <person name="Young J.M."/>
            <person name="Friedman C."/>
            <person name="Williams E.M."/>
            <person name="Ross J.A."/>
            <person name="Tonnes-Priddy L."/>
            <person name="Trask B.J."/>
        </authorList>
    </citation>
    <scope>NUCLEOTIDE SEQUENCE [GENOMIC DNA]</scope>
</reference>
<reference key="3">
    <citation type="journal article" date="2002" name="Hum. Mol. Genet.">
        <authorList>
            <person name="Young J.M."/>
            <person name="Friedman C."/>
            <person name="Williams E.M."/>
            <person name="Ross J.A."/>
            <person name="Tonnes-Priddy L."/>
            <person name="Trask B.J."/>
        </authorList>
    </citation>
    <scope>ERRATUM OF PUBMED:11875048</scope>
</reference>
<comment type="function">
    <text>Potential odorant receptor.</text>
</comment>
<comment type="subcellular location">
    <subcellularLocation>
        <location evidence="3">Cell membrane</location>
        <topology evidence="1">Multi-pass membrane protein</topology>
    </subcellularLocation>
</comment>
<comment type="similarity">
    <text evidence="2">Belongs to the G-protein coupled receptor 1 family.</text>
</comment>